<accession>B1JKZ8</accession>
<proteinExistence type="inferred from homology"/>
<sequence length="938" mass="104690">MSDYKNTLNLPETGFPMRGDLAKREPDMLKRWYEQDLYGIIRAAKKGKKTFILHDGPPYANGNIHIGHSVNKILKDIIVKSKGMAGYDSPYIPGWDCHGLPIELKVEQLIGKPGEKVSAAEFRTACRKYAAEQVEGQKKDFIRLGVLGDWDHPYLTMDFKTEANIIRALSKIIDNGHLHKGAKPVHWCTDCGSSLAEAEVEYYDKTSQSIDVRFNAVDTATVAAKFGVSAVNGPISLVIWTTTPWTLPANRAISLNAEYLYQLVQVEGECLILAADLVESVMKRAGITQWAVLGSCTGSDLELLRFTHPFMGFDVPAILGDHVTLDAGTGAVHTAPGHGPDDFVIGQKYGLEVANPVGPNGCYLAGTYPTLDGLFVFKANDVVVELLREKGALLHVEKLLHSYPCCWRHKTPIIFRATPQWFISMDQKGLRKQSLQEIKGVQWIPDWGQARIETMVANRPDWCISRQRTWGVPMSLFVHKETEQLHPRSIELMEEVAKRVEQDGIQAWWDLDPAEILGADAADYVKVPDTLDVWFDSGSTHSSVVDVRPEFGGHSPDMYLEGSDQHRGWFMSSLMIATAMKGKAPYRQVLTHGFTVDGQGRKMSKSIGNTISPQDVMNKLGGDILRLWVASTDYTGEIAVSDEILKRSADSYRRIRNTARFLLANLNGFDPAQHQVKPEEMVVVDRWAVGRAQAAQAEIMEAYENYDFHLVVQRLMQFCSVEMGSFYLDIIKDRQYTAKGDGIARRSCQTALFHIAEALVRWMAPIMSFTADEIWNHLPGERQQYVFTEEWYDGLFGLAGNESMNDTFWAELLKVRGEVNKVLEQARSDKRIGGSLEAAVTLYAEPELAARLNSLQDELRFVLLTSAAKVAAYADAGNDAQQSELIAGLKITFNKADGEKCPRCWHYTQDVGLVAEHAELCGRCVTNVAGDGEERKFA</sequence>
<organism>
    <name type="scientific">Yersinia pseudotuberculosis serotype O:3 (strain YPIII)</name>
    <dbReference type="NCBI Taxonomy" id="502800"/>
    <lineage>
        <taxon>Bacteria</taxon>
        <taxon>Pseudomonadati</taxon>
        <taxon>Pseudomonadota</taxon>
        <taxon>Gammaproteobacteria</taxon>
        <taxon>Enterobacterales</taxon>
        <taxon>Yersiniaceae</taxon>
        <taxon>Yersinia</taxon>
    </lineage>
</organism>
<gene>
    <name evidence="1" type="primary">ileS</name>
    <name type="ordered locus">YPK_3588</name>
</gene>
<dbReference type="EC" id="6.1.1.5" evidence="1"/>
<dbReference type="EMBL" id="CP000950">
    <property type="protein sequence ID" value="ACA69855.1"/>
    <property type="molecule type" value="Genomic_DNA"/>
</dbReference>
<dbReference type="RefSeq" id="WP_002210509.1">
    <property type="nucleotide sequence ID" value="NZ_CP009792.1"/>
</dbReference>
<dbReference type="SMR" id="B1JKZ8"/>
<dbReference type="GeneID" id="57974135"/>
<dbReference type="KEGG" id="ypy:YPK_3588"/>
<dbReference type="PATRIC" id="fig|502800.11.peg.4336"/>
<dbReference type="GO" id="GO:0005829">
    <property type="term" value="C:cytosol"/>
    <property type="evidence" value="ECO:0007669"/>
    <property type="project" value="TreeGrafter"/>
</dbReference>
<dbReference type="GO" id="GO:0002161">
    <property type="term" value="F:aminoacyl-tRNA deacylase activity"/>
    <property type="evidence" value="ECO:0007669"/>
    <property type="project" value="InterPro"/>
</dbReference>
<dbReference type="GO" id="GO:0005524">
    <property type="term" value="F:ATP binding"/>
    <property type="evidence" value="ECO:0007669"/>
    <property type="project" value="UniProtKB-UniRule"/>
</dbReference>
<dbReference type="GO" id="GO:0004822">
    <property type="term" value="F:isoleucine-tRNA ligase activity"/>
    <property type="evidence" value="ECO:0007669"/>
    <property type="project" value="UniProtKB-UniRule"/>
</dbReference>
<dbReference type="GO" id="GO:0000049">
    <property type="term" value="F:tRNA binding"/>
    <property type="evidence" value="ECO:0007669"/>
    <property type="project" value="InterPro"/>
</dbReference>
<dbReference type="GO" id="GO:0008270">
    <property type="term" value="F:zinc ion binding"/>
    <property type="evidence" value="ECO:0007669"/>
    <property type="project" value="UniProtKB-UniRule"/>
</dbReference>
<dbReference type="GO" id="GO:0006428">
    <property type="term" value="P:isoleucyl-tRNA aminoacylation"/>
    <property type="evidence" value="ECO:0007669"/>
    <property type="project" value="UniProtKB-UniRule"/>
</dbReference>
<dbReference type="CDD" id="cd07960">
    <property type="entry name" value="Anticodon_Ia_Ile_BEm"/>
    <property type="match status" value="1"/>
</dbReference>
<dbReference type="CDD" id="cd00818">
    <property type="entry name" value="IleRS_core"/>
    <property type="match status" value="1"/>
</dbReference>
<dbReference type="FunFam" id="1.10.730.20:FF:000001">
    <property type="entry name" value="Isoleucine--tRNA ligase"/>
    <property type="match status" value="1"/>
</dbReference>
<dbReference type="FunFam" id="3.40.50.620:FF:000042">
    <property type="entry name" value="Isoleucine--tRNA ligase"/>
    <property type="match status" value="1"/>
</dbReference>
<dbReference type="FunFam" id="3.40.50.620:FF:000048">
    <property type="entry name" value="Isoleucine--tRNA ligase"/>
    <property type="match status" value="1"/>
</dbReference>
<dbReference type="FunFam" id="3.90.740.10:FF:000002">
    <property type="entry name" value="Isoleucine--tRNA ligase"/>
    <property type="match status" value="1"/>
</dbReference>
<dbReference type="Gene3D" id="1.10.730.20">
    <property type="match status" value="1"/>
</dbReference>
<dbReference type="Gene3D" id="3.40.50.620">
    <property type="entry name" value="HUPs"/>
    <property type="match status" value="2"/>
</dbReference>
<dbReference type="Gene3D" id="3.90.740.10">
    <property type="entry name" value="Valyl/Leucyl/Isoleucyl-tRNA synthetase, editing domain"/>
    <property type="match status" value="1"/>
</dbReference>
<dbReference type="HAMAP" id="MF_02002">
    <property type="entry name" value="Ile_tRNA_synth_type1"/>
    <property type="match status" value="1"/>
</dbReference>
<dbReference type="InterPro" id="IPR001412">
    <property type="entry name" value="aa-tRNA-synth_I_CS"/>
</dbReference>
<dbReference type="InterPro" id="IPR002300">
    <property type="entry name" value="aa-tRNA-synth_Ia"/>
</dbReference>
<dbReference type="InterPro" id="IPR033708">
    <property type="entry name" value="Anticodon_Ile_BEm"/>
</dbReference>
<dbReference type="InterPro" id="IPR002301">
    <property type="entry name" value="Ile-tRNA-ligase"/>
</dbReference>
<dbReference type="InterPro" id="IPR023585">
    <property type="entry name" value="Ile-tRNA-ligase_type1"/>
</dbReference>
<dbReference type="InterPro" id="IPR050081">
    <property type="entry name" value="Ile-tRNA_ligase"/>
</dbReference>
<dbReference type="InterPro" id="IPR013155">
    <property type="entry name" value="M/V/L/I-tRNA-synth_anticd-bd"/>
</dbReference>
<dbReference type="InterPro" id="IPR014729">
    <property type="entry name" value="Rossmann-like_a/b/a_fold"/>
</dbReference>
<dbReference type="InterPro" id="IPR009080">
    <property type="entry name" value="tRNAsynth_Ia_anticodon-bd"/>
</dbReference>
<dbReference type="InterPro" id="IPR009008">
    <property type="entry name" value="Val/Leu/Ile-tRNA-synth_edit"/>
</dbReference>
<dbReference type="InterPro" id="IPR010663">
    <property type="entry name" value="Znf_FPG/IleRS"/>
</dbReference>
<dbReference type="NCBIfam" id="TIGR00392">
    <property type="entry name" value="ileS"/>
    <property type="match status" value="1"/>
</dbReference>
<dbReference type="PANTHER" id="PTHR42765:SF1">
    <property type="entry name" value="ISOLEUCINE--TRNA LIGASE, MITOCHONDRIAL"/>
    <property type="match status" value="1"/>
</dbReference>
<dbReference type="PANTHER" id="PTHR42765">
    <property type="entry name" value="SOLEUCYL-TRNA SYNTHETASE"/>
    <property type="match status" value="1"/>
</dbReference>
<dbReference type="Pfam" id="PF08264">
    <property type="entry name" value="Anticodon_1"/>
    <property type="match status" value="1"/>
</dbReference>
<dbReference type="Pfam" id="PF00133">
    <property type="entry name" value="tRNA-synt_1"/>
    <property type="match status" value="1"/>
</dbReference>
<dbReference type="Pfam" id="PF06827">
    <property type="entry name" value="zf-FPG_IleRS"/>
    <property type="match status" value="1"/>
</dbReference>
<dbReference type="PRINTS" id="PR00984">
    <property type="entry name" value="TRNASYNTHILE"/>
</dbReference>
<dbReference type="SUPFAM" id="SSF47323">
    <property type="entry name" value="Anticodon-binding domain of a subclass of class I aminoacyl-tRNA synthetases"/>
    <property type="match status" value="1"/>
</dbReference>
<dbReference type="SUPFAM" id="SSF52374">
    <property type="entry name" value="Nucleotidylyl transferase"/>
    <property type="match status" value="1"/>
</dbReference>
<dbReference type="SUPFAM" id="SSF50677">
    <property type="entry name" value="ValRS/IleRS/LeuRS editing domain"/>
    <property type="match status" value="1"/>
</dbReference>
<dbReference type="PROSITE" id="PS00178">
    <property type="entry name" value="AA_TRNA_LIGASE_I"/>
    <property type="match status" value="1"/>
</dbReference>
<keyword id="KW-0030">Aminoacyl-tRNA synthetase</keyword>
<keyword id="KW-0067">ATP-binding</keyword>
<keyword id="KW-0963">Cytoplasm</keyword>
<keyword id="KW-0436">Ligase</keyword>
<keyword id="KW-0479">Metal-binding</keyword>
<keyword id="KW-0547">Nucleotide-binding</keyword>
<keyword id="KW-0648">Protein biosynthesis</keyword>
<keyword id="KW-0862">Zinc</keyword>
<name>SYI_YERPY</name>
<reference key="1">
    <citation type="submission" date="2008-02" db="EMBL/GenBank/DDBJ databases">
        <title>Complete sequence of Yersinia pseudotuberculosis YPIII.</title>
        <authorList>
            <consortium name="US DOE Joint Genome Institute"/>
            <person name="Copeland A."/>
            <person name="Lucas S."/>
            <person name="Lapidus A."/>
            <person name="Glavina del Rio T."/>
            <person name="Dalin E."/>
            <person name="Tice H."/>
            <person name="Bruce D."/>
            <person name="Goodwin L."/>
            <person name="Pitluck S."/>
            <person name="Munk A.C."/>
            <person name="Brettin T."/>
            <person name="Detter J.C."/>
            <person name="Han C."/>
            <person name="Tapia R."/>
            <person name="Schmutz J."/>
            <person name="Larimer F."/>
            <person name="Land M."/>
            <person name="Hauser L."/>
            <person name="Challacombe J.F."/>
            <person name="Green L."/>
            <person name="Lindler L.E."/>
            <person name="Nikolich M.P."/>
            <person name="Richardson P."/>
        </authorList>
    </citation>
    <scope>NUCLEOTIDE SEQUENCE [LARGE SCALE GENOMIC DNA]</scope>
    <source>
        <strain>YPIII</strain>
    </source>
</reference>
<feature type="chain" id="PRO_1000189221" description="Isoleucine--tRNA ligase">
    <location>
        <begin position="1"/>
        <end position="938"/>
    </location>
</feature>
<feature type="short sequence motif" description="'HIGH' region">
    <location>
        <begin position="58"/>
        <end position="68"/>
    </location>
</feature>
<feature type="short sequence motif" description="'KMSKS' region">
    <location>
        <begin position="602"/>
        <end position="606"/>
    </location>
</feature>
<feature type="binding site" evidence="1">
    <location>
        <position position="561"/>
    </location>
    <ligand>
        <name>L-isoleucyl-5'-AMP</name>
        <dbReference type="ChEBI" id="CHEBI:178002"/>
    </ligand>
</feature>
<feature type="binding site" evidence="1">
    <location>
        <position position="605"/>
    </location>
    <ligand>
        <name>ATP</name>
        <dbReference type="ChEBI" id="CHEBI:30616"/>
    </ligand>
</feature>
<feature type="binding site" evidence="1">
    <location>
        <position position="901"/>
    </location>
    <ligand>
        <name>Zn(2+)</name>
        <dbReference type="ChEBI" id="CHEBI:29105"/>
    </ligand>
</feature>
<feature type="binding site" evidence="1">
    <location>
        <position position="904"/>
    </location>
    <ligand>
        <name>Zn(2+)</name>
        <dbReference type="ChEBI" id="CHEBI:29105"/>
    </ligand>
</feature>
<feature type="binding site" evidence="1">
    <location>
        <position position="921"/>
    </location>
    <ligand>
        <name>Zn(2+)</name>
        <dbReference type="ChEBI" id="CHEBI:29105"/>
    </ligand>
</feature>
<feature type="binding site" evidence="1">
    <location>
        <position position="924"/>
    </location>
    <ligand>
        <name>Zn(2+)</name>
        <dbReference type="ChEBI" id="CHEBI:29105"/>
    </ligand>
</feature>
<protein>
    <recommendedName>
        <fullName evidence="1">Isoleucine--tRNA ligase</fullName>
        <ecNumber evidence="1">6.1.1.5</ecNumber>
    </recommendedName>
    <alternativeName>
        <fullName evidence="1">Isoleucyl-tRNA synthetase</fullName>
        <shortName evidence="1">IleRS</shortName>
    </alternativeName>
</protein>
<evidence type="ECO:0000255" key="1">
    <source>
        <dbReference type="HAMAP-Rule" id="MF_02002"/>
    </source>
</evidence>
<comment type="function">
    <text evidence="1">Catalyzes the attachment of isoleucine to tRNA(Ile). As IleRS can inadvertently accommodate and process structurally similar amino acids such as valine, to avoid such errors it has two additional distinct tRNA(Ile)-dependent editing activities. One activity is designated as 'pretransfer' editing and involves the hydrolysis of activated Val-AMP. The other activity is designated 'posttransfer' editing and involves deacylation of mischarged Val-tRNA(Ile).</text>
</comment>
<comment type="catalytic activity">
    <reaction evidence="1">
        <text>tRNA(Ile) + L-isoleucine + ATP = L-isoleucyl-tRNA(Ile) + AMP + diphosphate</text>
        <dbReference type="Rhea" id="RHEA:11060"/>
        <dbReference type="Rhea" id="RHEA-COMP:9666"/>
        <dbReference type="Rhea" id="RHEA-COMP:9695"/>
        <dbReference type="ChEBI" id="CHEBI:30616"/>
        <dbReference type="ChEBI" id="CHEBI:33019"/>
        <dbReference type="ChEBI" id="CHEBI:58045"/>
        <dbReference type="ChEBI" id="CHEBI:78442"/>
        <dbReference type="ChEBI" id="CHEBI:78528"/>
        <dbReference type="ChEBI" id="CHEBI:456215"/>
        <dbReference type="EC" id="6.1.1.5"/>
    </reaction>
</comment>
<comment type="cofactor">
    <cofactor evidence="1">
        <name>Zn(2+)</name>
        <dbReference type="ChEBI" id="CHEBI:29105"/>
    </cofactor>
    <text evidence="1">Binds 1 zinc ion per subunit.</text>
</comment>
<comment type="subunit">
    <text evidence="1">Monomer.</text>
</comment>
<comment type="subcellular location">
    <subcellularLocation>
        <location evidence="1">Cytoplasm</location>
    </subcellularLocation>
</comment>
<comment type="domain">
    <text evidence="1">IleRS has two distinct active sites: one for aminoacylation and one for editing. The misactivated valine is translocated from the active site to the editing site, which sterically excludes the correctly activated isoleucine. The single editing site contains two valyl binding pockets, one specific for each substrate (Val-AMP or Val-tRNA(Ile)).</text>
</comment>
<comment type="similarity">
    <text evidence="1">Belongs to the class-I aminoacyl-tRNA synthetase family. IleS type 1 subfamily.</text>
</comment>